<keyword id="KW-0007">Acetylation</keyword>
<keyword id="KW-0221">Differentiation</keyword>
<keyword id="KW-0903">Direct protein sequencing</keyword>
<keyword id="KW-0406">Ion transport</keyword>
<keyword id="KW-1017">Isopeptide bond</keyword>
<keyword id="KW-0472">Membrane</keyword>
<keyword id="KW-0496">Mitochondrion</keyword>
<keyword id="KW-1000">Mitochondrion outer membrane</keyword>
<keyword id="KW-0520">NAD</keyword>
<keyword id="KW-0547">Nucleotide-binding</keyword>
<keyword id="KW-0597">Phosphoprotein</keyword>
<keyword id="KW-0626">Porin</keyword>
<keyword id="KW-1185">Reference proteome</keyword>
<keyword id="KW-0744">Spermatogenesis</keyword>
<keyword id="KW-0812">Transmembrane</keyword>
<keyword id="KW-1134">Transmembrane beta strand</keyword>
<keyword id="KW-0813">Transport</keyword>
<keyword id="KW-0832">Ubl conjugation</keyword>
<organism>
    <name type="scientific">Mus musculus</name>
    <name type="common">Mouse</name>
    <dbReference type="NCBI Taxonomy" id="10090"/>
    <lineage>
        <taxon>Eukaryota</taxon>
        <taxon>Metazoa</taxon>
        <taxon>Chordata</taxon>
        <taxon>Craniata</taxon>
        <taxon>Vertebrata</taxon>
        <taxon>Euteleostomi</taxon>
        <taxon>Mammalia</taxon>
        <taxon>Eutheria</taxon>
        <taxon>Euarchontoglires</taxon>
        <taxon>Glires</taxon>
        <taxon>Rodentia</taxon>
        <taxon>Myomorpha</taxon>
        <taxon>Muroidea</taxon>
        <taxon>Muridae</taxon>
        <taxon>Murinae</taxon>
        <taxon>Mus</taxon>
        <taxon>Mus</taxon>
    </lineage>
</organism>
<evidence type="ECO:0000250" key="1">
    <source>
        <dbReference type="UniProtKB" id="P21796"/>
    </source>
</evidence>
<evidence type="ECO:0000250" key="2">
    <source>
        <dbReference type="UniProtKB" id="Q9R1Z0"/>
    </source>
</evidence>
<evidence type="ECO:0000250" key="3">
    <source>
        <dbReference type="UniProtKB" id="Q9Y277"/>
    </source>
</evidence>
<evidence type="ECO:0000269" key="4">
    <source>
    </source>
</evidence>
<evidence type="ECO:0000269" key="5">
    <source>
    </source>
</evidence>
<evidence type="ECO:0000303" key="6">
    <source>
    </source>
</evidence>
<evidence type="ECO:0000305" key="7"/>
<evidence type="ECO:0000312" key="8">
    <source>
        <dbReference type="MGI" id="MGI:106922"/>
    </source>
</evidence>
<evidence type="ECO:0007744" key="9">
    <source>
    </source>
</evidence>
<evidence type="ECO:0007744" key="10">
    <source>
    </source>
</evidence>
<dbReference type="EMBL" id="U30839">
    <property type="protein sequence ID" value="AAB47776.1"/>
    <property type="molecule type" value="mRNA"/>
</dbReference>
<dbReference type="EMBL" id="AK083785">
    <property type="protein sequence ID" value="BAC39019.1"/>
    <property type="molecule type" value="mRNA"/>
</dbReference>
<dbReference type="EMBL" id="BC004743">
    <property type="protein sequence ID" value="AAH04743.1"/>
    <property type="molecule type" value="mRNA"/>
</dbReference>
<dbReference type="CCDS" id="CCDS22179.1"/>
<dbReference type="RefSeq" id="NP_035826.1">
    <property type="nucleotide sequence ID" value="NM_011696.2"/>
</dbReference>
<dbReference type="SMR" id="Q60931"/>
<dbReference type="BioGRID" id="204509">
    <property type="interactions" value="27"/>
</dbReference>
<dbReference type="FunCoup" id="Q60931">
    <property type="interactions" value="2933"/>
</dbReference>
<dbReference type="IntAct" id="Q60931">
    <property type="interactions" value="8"/>
</dbReference>
<dbReference type="MINT" id="Q60931"/>
<dbReference type="STRING" id="10090.ENSMUSP00000009036"/>
<dbReference type="TCDB" id="1.B.8.1.2">
    <property type="family name" value="the mitochondrial and plastid porin (mpp) family"/>
</dbReference>
<dbReference type="GlyGen" id="Q60931">
    <property type="glycosylation" value="3 sites, 2 N-linked glycans (2 sites), 1 O-linked glycan (1 site)"/>
</dbReference>
<dbReference type="iPTMnet" id="Q60931"/>
<dbReference type="PhosphoSitePlus" id="Q60931"/>
<dbReference type="SwissPalm" id="Q60931"/>
<dbReference type="jPOST" id="Q60931"/>
<dbReference type="PaxDb" id="10090-ENSMUSP00000136273"/>
<dbReference type="ProteomicsDB" id="297811"/>
<dbReference type="Pumba" id="Q60931"/>
<dbReference type="Antibodypedia" id="11458">
    <property type="antibodies" value="219 antibodies from 29 providers"/>
</dbReference>
<dbReference type="DNASU" id="22335"/>
<dbReference type="Ensembl" id="ENSMUST00000009036.11">
    <property type="protein sequence ID" value="ENSMUSP00000009036.4"/>
    <property type="gene ID" value="ENSMUSG00000008892.14"/>
</dbReference>
<dbReference type="GeneID" id="22335"/>
<dbReference type="KEGG" id="mmu:22335"/>
<dbReference type="UCSC" id="uc012gbf.1">
    <property type="organism name" value="mouse"/>
</dbReference>
<dbReference type="AGR" id="MGI:106922"/>
<dbReference type="CTD" id="7419"/>
<dbReference type="MGI" id="MGI:106922">
    <property type="gene designation" value="Vdac3"/>
</dbReference>
<dbReference type="VEuPathDB" id="HostDB:ENSMUSG00000008892"/>
<dbReference type="eggNOG" id="KOG3126">
    <property type="taxonomic scope" value="Eukaryota"/>
</dbReference>
<dbReference type="GeneTree" id="ENSGT00950000182869"/>
<dbReference type="HOGENOM" id="CLU_044399_2_0_1"/>
<dbReference type="InParanoid" id="Q60931"/>
<dbReference type="OMA" id="MAPPCYA"/>
<dbReference type="PhylomeDB" id="Q60931"/>
<dbReference type="Reactome" id="R-MMU-5205685">
    <property type="pathway name" value="PINK1-PRKN Mediated Mitophagy"/>
</dbReference>
<dbReference type="Reactome" id="R-MMU-5689880">
    <property type="pathway name" value="Ub-specific processing proteases"/>
</dbReference>
<dbReference type="BioGRID-ORCS" id="22335">
    <property type="hits" value="3 hits in 78 CRISPR screens"/>
</dbReference>
<dbReference type="CD-CODE" id="CE726F99">
    <property type="entry name" value="Postsynaptic density"/>
</dbReference>
<dbReference type="ChiTaRS" id="Vdac3">
    <property type="organism name" value="mouse"/>
</dbReference>
<dbReference type="PRO" id="PR:Q60931"/>
<dbReference type="Proteomes" id="UP000000589">
    <property type="component" value="Chromosome 8"/>
</dbReference>
<dbReference type="RNAct" id="Q60931">
    <property type="molecule type" value="protein"/>
</dbReference>
<dbReference type="Bgee" id="ENSMUSG00000008892">
    <property type="expression patterns" value="Expressed in spermatid and 71 other cell types or tissues"/>
</dbReference>
<dbReference type="ExpressionAtlas" id="Q60931">
    <property type="expression patterns" value="baseline and differential"/>
</dbReference>
<dbReference type="GO" id="GO:0005743">
    <property type="term" value="C:mitochondrial inner membrane"/>
    <property type="evidence" value="ECO:0007005"/>
    <property type="project" value="MGI"/>
</dbReference>
<dbReference type="GO" id="GO:0005741">
    <property type="term" value="C:mitochondrial outer membrane"/>
    <property type="evidence" value="ECO:0007669"/>
    <property type="project" value="UniProtKB-SubCell"/>
</dbReference>
<dbReference type="GO" id="GO:0005739">
    <property type="term" value="C:mitochondrion"/>
    <property type="evidence" value="ECO:0000314"/>
    <property type="project" value="MGI"/>
</dbReference>
<dbReference type="GO" id="GO:0046930">
    <property type="term" value="C:pore complex"/>
    <property type="evidence" value="ECO:0007669"/>
    <property type="project" value="UniProtKB-KW"/>
</dbReference>
<dbReference type="GO" id="GO:0045202">
    <property type="term" value="C:synapse"/>
    <property type="evidence" value="ECO:0007669"/>
    <property type="project" value="GOC"/>
</dbReference>
<dbReference type="GO" id="GO:0000166">
    <property type="term" value="F:nucleotide binding"/>
    <property type="evidence" value="ECO:0007669"/>
    <property type="project" value="UniProtKB-KW"/>
</dbReference>
<dbReference type="GO" id="GO:0015288">
    <property type="term" value="F:porin activity"/>
    <property type="evidence" value="ECO:0007669"/>
    <property type="project" value="UniProtKB-KW"/>
</dbReference>
<dbReference type="GO" id="GO:0008308">
    <property type="term" value="F:voltage-gated monoatomic anion channel activity"/>
    <property type="evidence" value="ECO:0007669"/>
    <property type="project" value="InterPro"/>
</dbReference>
<dbReference type="GO" id="GO:0001662">
    <property type="term" value="P:behavioral fear response"/>
    <property type="evidence" value="ECO:0000315"/>
    <property type="project" value="MGI"/>
</dbReference>
<dbReference type="GO" id="GO:0007268">
    <property type="term" value="P:chemical synaptic transmission"/>
    <property type="evidence" value="ECO:0000315"/>
    <property type="project" value="MGI"/>
</dbReference>
<dbReference type="GO" id="GO:0007612">
    <property type="term" value="P:learning"/>
    <property type="evidence" value="ECO:0000315"/>
    <property type="project" value="MGI"/>
</dbReference>
<dbReference type="GO" id="GO:0007270">
    <property type="term" value="P:neuron-neuron synaptic transmission"/>
    <property type="evidence" value="ECO:0000315"/>
    <property type="project" value="MGI"/>
</dbReference>
<dbReference type="GO" id="GO:0120317">
    <property type="term" value="P:sperm mitochondrial sheath assembly"/>
    <property type="evidence" value="ECO:0000315"/>
    <property type="project" value="UniProtKB"/>
</dbReference>
<dbReference type="GO" id="GO:0007283">
    <property type="term" value="P:spermatogenesis"/>
    <property type="evidence" value="ECO:0000315"/>
    <property type="project" value="UniProtKB"/>
</dbReference>
<dbReference type="CDD" id="cd07306">
    <property type="entry name" value="Porin3_VDAC"/>
    <property type="match status" value="1"/>
</dbReference>
<dbReference type="FunFam" id="2.40.160.10:FF:000001">
    <property type="entry name" value="Voltage-dependent anion-selective channel protein 2"/>
    <property type="match status" value="1"/>
</dbReference>
<dbReference type="Gene3D" id="2.40.160.10">
    <property type="entry name" value="Porin"/>
    <property type="match status" value="1"/>
</dbReference>
<dbReference type="InterPro" id="IPR023614">
    <property type="entry name" value="Porin_dom_sf"/>
</dbReference>
<dbReference type="InterPro" id="IPR001925">
    <property type="entry name" value="Porin_Euk"/>
</dbReference>
<dbReference type="InterPro" id="IPR027246">
    <property type="entry name" value="Porin_Euk/Tom40"/>
</dbReference>
<dbReference type="PANTHER" id="PTHR11743">
    <property type="entry name" value="VOLTAGE-DEPENDENT ANION-SELECTIVE CHANNEL"/>
    <property type="match status" value="1"/>
</dbReference>
<dbReference type="PANTHER" id="PTHR11743:SF28">
    <property type="entry name" value="VOLTAGE-DEPENDENT ANION-SELECTIVE CHANNEL PROTEIN 3"/>
    <property type="match status" value="1"/>
</dbReference>
<dbReference type="Pfam" id="PF01459">
    <property type="entry name" value="Porin_3"/>
    <property type="match status" value="1"/>
</dbReference>
<dbReference type="PRINTS" id="PR00185">
    <property type="entry name" value="EUKARYTPORIN"/>
</dbReference>
<dbReference type="PROSITE" id="PS00558">
    <property type="entry name" value="EUKARYOTIC_PORIN"/>
    <property type="match status" value="1"/>
</dbReference>
<accession>Q60931</accession>
<accession>Q8BNG2</accession>
<name>VDAC3_MOUSE</name>
<protein>
    <recommendedName>
        <fullName evidence="7">Non-selective voltage-gated ion channel VDAC3</fullName>
        <shortName>VDAC-3</shortName>
        <shortName evidence="6">mVDAC3</shortName>
    </recommendedName>
    <alternativeName>
        <fullName>Outer mitochondrial membrane protein porin 3</fullName>
    </alternativeName>
</protein>
<feature type="initiator methionine" description="Removed" evidence="10">
    <location>
        <position position="1"/>
    </location>
</feature>
<feature type="chain" id="PRO_0000050513" description="Non-selective voltage-gated ion channel VDAC3">
    <location>
        <begin position="2"/>
        <end position="283"/>
    </location>
</feature>
<feature type="transmembrane region" description="Beta stranded" evidence="1">
    <location>
        <begin position="26"/>
        <end position="35"/>
    </location>
</feature>
<feature type="transmembrane region" description="Beta stranded" evidence="1">
    <location>
        <begin position="39"/>
        <end position="47"/>
    </location>
</feature>
<feature type="transmembrane region" description="Beta stranded" evidence="1">
    <location>
        <begin position="54"/>
        <end position="64"/>
    </location>
</feature>
<feature type="transmembrane region" description="Beta stranded" evidence="1">
    <location>
        <begin position="69"/>
        <end position="76"/>
    </location>
</feature>
<feature type="transmembrane region" description="Beta stranded" evidence="1">
    <location>
        <begin position="80"/>
        <end position="89"/>
    </location>
</feature>
<feature type="transmembrane region" description="Beta stranded" evidence="1">
    <location>
        <begin position="95"/>
        <end position="104"/>
    </location>
</feature>
<feature type="transmembrane region" description="Beta stranded" evidence="1">
    <location>
        <begin position="111"/>
        <end position="120"/>
    </location>
</feature>
<feature type="transmembrane region" description="Beta stranded" evidence="1">
    <location>
        <begin position="123"/>
        <end position="130"/>
    </location>
</feature>
<feature type="transmembrane region" description="Beta stranded" evidence="1">
    <location>
        <begin position="137"/>
        <end position="145"/>
    </location>
</feature>
<feature type="transmembrane region" description="Beta stranded" evidence="1">
    <location>
        <begin position="150"/>
        <end position="158"/>
    </location>
</feature>
<feature type="transmembrane region" description="Beta stranded" evidence="1">
    <location>
        <begin position="163"/>
        <end position="175"/>
    </location>
</feature>
<feature type="transmembrane region" description="Beta stranded" evidence="1">
    <location>
        <begin position="178"/>
        <end position="185"/>
    </location>
</feature>
<feature type="transmembrane region" description="Beta stranded" evidence="1">
    <location>
        <begin position="189"/>
        <end position="198"/>
    </location>
</feature>
<feature type="transmembrane region" description="Beta stranded" evidence="1">
    <location>
        <begin position="202"/>
        <end position="211"/>
    </location>
</feature>
<feature type="transmembrane region" description="Beta stranded" evidence="1">
    <location>
        <begin position="218"/>
        <end position="227"/>
    </location>
</feature>
<feature type="transmembrane region" description="Beta stranded" evidence="1">
    <location>
        <begin position="231"/>
        <end position="238"/>
    </location>
</feature>
<feature type="transmembrane region" description="Beta stranded" evidence="1">
    <location>
        <begin position="242"/>
        <end position="251"/>
    </location>
</feature>
<feature type="transmembrane region" description="Beta stranded" evidence="1">
    <location>
        <begin position="254"/>
        <end position="263"/>
    </location>
</feature>
<feature type="transmembrane region" description="Beta stranded" evidence="1">
    <location>
        <begin position="273"/>
        <end position="282"/>
    </location>
</feature>
<feature type="binding site" evidence="1">
    <location>
        <begin position="242"/>
        <end position="244"/>
    </location>
    <ligand>
        <name>NAD(+)</name>
        <dbReference type="ChEBI" id="CHEBI:57540"/>
    </ligand>
</feature>
<feature type="binding site" evidence="1">
    <location>
        <begin position="260"/>
        <end position="264"/>
    </location>
    <ligand>
        <name>NAD(+)</name>
        <dbReference type="ChEBI" id="CHEBI:57540"/>
    </ligand>
</feature>
<feature type="modified residue" description="N-acetylcysteine" evidence="10">
    <location>
        <position position="2"/>
    </location>
</feature>
<feature type="modified residue" description="Phosphothreonine" evidence="3">
    <location>
        <position position="4"/>
    </location>
</feature>
<feature type="modified residue" description="N6-acetyllysine" evidence="10">
    <location>
        <position position="12"/>
    </location>
</feature>
<feature type="modified residue" description="N6-acetyllysine" evidence="9">
    <location>
        <position position="15"/>
    </location>
</feature>
<feature type="modified residue" description="N6-acetyllysine" evidence="9 10">
    <location>
        <position position="20"/>
    </location>
</feature>
<feature type="modified residue" description="N6-acetyllysine" evidence="9">
    <location>
        <position position="90"/>
    </location>
</feature>
<feature type="modified residue" description="Phosphoserine" evidence="2">
    <location>
        <position position="241"/>
    </location>
</feature>
<feature type="modified residue" description="N6-acetyllysine; alternate" evidence="9">
    <location>
        <position position="266"/>
    </location>
</feature>
<feature type="cross-link" description="Glycyl lysine isopeptide (Lys-Gly) (interchain with G-Cter in ubiquitin)" evidence="3">
    <location>
        <position position="53"/>
    </location>
</feature>
<feature type="cross-link" description="Glycyl lysine isopeptide (Lys-Gly) (interchain with G-Cter in ubiquitin)" evidence="3">
    <location>
        <position position="109"/>
    </location>
</feature>
<feature type="cross-link" description="Glycyl lysine isopeptide (Lys-Gly) (interchain with G-Cter in ubiquitin)" evidence="3">
    <location>
        <position position="110"/>
    </location>
</feature>
<feature type="cross-link" description="Glycyl lysine isopeptide (Lys-Gly) (interchain with G-Cter in ubiquitin); alternate" evidence="3">
    <location>
        <position position="266"/>
    </location>
</feature>
<feature type="sequence conflict" description="In Ref. 2; BAC39019." evidence="7" ref="2">
    <original>V</original>
    <variation>VM</variation>
    <location>
        <position position="39"/>
    </location>
</feature>
<feature type="sequence conflict" description="In Ref. 2; BAC39019." evidence="7" ref="2">
    <original>K</original>
    <variation>E</variation>
    <location>
        <position position="174"/>
    </location>
</feature>
<gene>
    <name evidence="8" type="primary">Vdac3</name>
</gene>
<sequence>MCNTPTYCDLGKAAKDVFNKGYGFGMVKIDLKTKSCSGVEFSTSGHAYTDTGKASGNLETKYKVCNYGLTFTQKWNTDNTLGTEISWENKLAEGLKLTLDTIFVPNTGKKSGKLKASYRRDCFSLGSNVDIDFSGPTIYGWAVLAFEGWLAGYQMSFDTAKSKLSQNNFALGYKAADFQLHTHVNDGTEFGGSIYQKVNERIETSINLAWTAGSNNTRFGIAAKYKLDCRTSLSAKVNNASLIGLGYTQTLRPGVKLTLSALIDGKNFNAGGHKVGLGFELEA</sequence>
<comment type="function">
    <text evidence="3 5">Non-selective voltage-gated ion channel that mediates the transport of anions and cations through the mitochondrion outer membrane and plasma membrane. Forms a high-conducting channel with a stable open state and a voltage-induced closure with a mild preference for anions over cations (By similarity). Involved in male fertility and sperm mitochondrial sheath formation (PubMed:35228556).</text>
</comment>
<comment type="catalytic activity">
    <reaction evidence="3">
        <text>chloride(in) = chloride(out)</text>
        <dbReference type="Rhea" id="RHEA:29823"/>
        <dbReference type="ChEBI" id="CHEBI:17996"/>
    </reaction>
</comment>
<comment type="catalytic activity">
    <reaction evidence="3">
        <text>K(+)(in) = K(+)(out)</text>
        <dbReference type="Rhea" id="RHEA:29463"/>
        <dbReference type="ChEBI" id="CHEBI:29103"/>
    </reaction>
</comment>
<comment type="subunit">
    <text evidence="4 5">Interacts with ARMC12 in a TBC1D21-dependent manner (PubMed:33536340). Interacts with MISFA (PubMed:35228556).</text>
</comment>
<comment type="subcellular location">
    <subcellularLocation>
        <location evidence="1">Mitochondrion outer membrane</location>
    </subcellularLocation>
    <subcellularLocation>
        <location evidence="3">Membrane</location>
    </subcellularLocation>
    <text evidence="3">May localize to non-mitochondrial membranes.</text>
</comment>
<comment type="tissue specificity">
    <text>Highest levels of expression detected in testis, less but still abundant expression in heart, kidney, brain, and skeletal muscle.</text>
</comment>
<comment type="domain">
    <text evidence="1">Consists mainly of a membrane-spanning beta-barrel formed by 19 beta-strands.</text>
</comment>
<comment type="PTM">
    <text evidence="3">Ubiquitinated by PRKN during mitophagy, leading to its degradation and enhancement of mitophagy. Deubiquitinated by USP30.</text>
</comment>
<comment type="disruption phenotype">
    <text evidence="5">Male Vdac3-deficient mice are infertile as a result of reduced sperm mobility due to an abnormal mitochondrial sheat in spermatozoa.</text>
</comment>
<comment type="similarity">
    <text evidence="7">Belongs to the eukaryotic mitochondrial porin family.</text>
</comment>
<proteinExistence type="evidence at protein level"/>
<reference key="1">
    <citation type="journal article" date="1996" name="Genomics">
        <title>A novel mouse mitochondrial voltage-dependent anion channel gene localizes to chromosome 8.</title>
        <authorList>
            <person name="Sampson M.J."/>
            <person name="Lovell R.S."/>
            <person name="Davison D.B."/>
            <person name="Craigen W.J."/>
        </authorList>
    </citation>
    <scope>NUCLEOTIDE SEQUENCE [MRNA]</scope>
    <source>
        <tissue>Liver</tissue>
    </source>
</reference>
<reference key="2">
    <citation type="journal article" date="2005" name="Science">
        <title>The transcriptional landscape of the mammalian genome.</title>
        <authorList>
            <person name="Carninci P."/>
            <person name="Kasukawa T."/>
            <person name="Katayama S."/>
            <person name="Gough J."/>
            <person name="Frith M.C."/>
            <person name="Maeda N."/>
            <person name="Oyama R."/>
            <person name="Ravasi T."/>
            <person name="Lenhard B."/>
            <person name="Wells C."/>
            <person name="Kodzius R."/>
            <person name="Shimokawa K."/>
            <person name="Bajic V.B."/>
            <person name="Brenner S.E."/>
            <person name="Batalov S."/>
            <person name="Forrest A.R."/>
            <person name="Zavolan M."/>
            <person name="Davis M.J."/>
            <person name="Wilming L.G."/>
            <person name="Aidinis V."/>
            <person name="Allen J.E."/>
            <person name="Ambesi-Impiombato A."/>
            <person name="Apweiler R."/>
            <person name="Aturaliya R.N."/>
            <person name="Bailey T.L."/>
            <person name="Bansal M."/>
            <person name="Baxter L."/>
            <person name="Beisel K.W."/>
            <person name="Bersano T."/>
            <person name="Bono H."/>
            <person name="Chalk A.M."/>
            <person name="Chiu K.P."/>
            <person name="Choudhary V."/>
            <person name="Christoffels A."/>
            <person name="Clutterbuck D.R."/>
            <person name="Crowe M.L."/>
            <person name="Dalla E."/>
            <person name="Dalrymple B.P."/>
            <person name="de Bono B."/>
            <person name="Della Gatta G."/>
            <person name="di Bernardo D."/>
            <person name="Down T."/>
            <person name="Engstrom P."/>
            <person name="Fagiolini M."/>
            <person name="Faulkner G."/>
            <person name="Fletcher C.F."/>
            <person name="Fukushima T."/>
            <person name="Furuno M."/>
            <person name="Futaki S."/>
            <person name="Gariboldi M."/>
            <person name="Georgii-Hemming P."/>
            <person name="Gingeras T.R."/>
            <person name="Gojobori T."/>
            <person name="Green R.E."/>
            <person name="Gustincich S."/>
            <person name="Harbers M."/>
            <person name="Hayashi Y."/>
            <person name="Hensch T.K."/>
            <person name="Hirokawa N."/>
            <person name="Hill D."/>
            <person name="Huminiecki L."/>
            <person name="Iacono M."/>
            <person name="Ikeo K."/>
            <person name="Iwama A."/>
            <person name="Ishikawa T."/>
            <person name="Jakt M."/>
            <person name="Kanapin A."/>
            <person name="Katoh M."/>
            <person name="Kawasawa Y."/>
            <person name="Kelso J."/>
            <person name="Kitamura H."/>
            <person name="Kitano H."/>
            <person name="Kollias G."/>
            <person name="Krishnan S.P."/>
            <person name="Kruger A."/>
            <person name="Kummerfeld S.K."/>
            <person name="Kurochkin I.V."/>
            <person name="Lareau L.F."/>
            <person name="Lazarevic D."/>
            <person name="Lipovich L."/>
            <person name="Liu J."/>
            <person name="Liuni S."/>
            <person name="McWilliam S."/>
            <person name="Madan Babu M."/>
            <person name="Madera M."/>
            <person name="Marchionni L."/>
            <person name="Matsuda H."/>
            <person name="Matsuzawa S."/>
            <person name="Miki H."/>
            <person name="Mignone F."/>
            <person name="Miyake S."/>
            <person name="Morris K."/>
            <person name="Mottagui-Tabar S."/>
            <person name="Mulder N."/>
            <person name="Nakano N."/>
            <person name="Nakauchi H."/>
            <person name="Ng P."/>
            <person name="Nilsson R."/>
            <person name="Nishiguchi S."/>
            <person name="Nishikawa S."/>
            <person name="Nori F."/>
            <person name="Ohara O."/>
            <person name="Okazaki Y."/>
            <person name="Orlando V."/>
            <person name="Pang K.C."/>
            <person name="Pavan W.J."/>
            <person name="Pavesi G."/>
            <person name="Pesole G."/>
            <person name="Petrovsky N."/>
            <person name="Piazza S."/>
            <person name="Reed J."/>
            <person name="Reid J.F."/>
            <person name="Ring B.Z."/>
            <person name="Ringwald M."/>
            <person name="Rost B."/>
            <person name="Ruan Y."/>
            <person name="Salzberg S.L."/>
            <person name="Sandelin A."/>
            <person name="Schneider C."/>
            <person name="Schoenbach C."/>
            <person name="Sekiguchi K."/>
            <person name="Semple C.A."/>
            <person name="Seno S."/>
            <person name="Sessa L."/>
            <person name="Sheng Y."/>
            <person name="Shibata Y."/>
            <person name="Shimada H."/>
            <person name="Shimada K."/>
            <person name="Silva D."/>
            <person name="Sinclair B."/>
            <person name="Sperling S."/>
            <person name="Stupka E."/>
            <person name="Sugiura K."/>
            <person name="Sultana R."/>
            <person name="Takenaka Y."/>
            <person name="Taki K."/>
            <person name="Tammoja K."/>
            <person name="Tan S.L."/>
            <person name="Tang S."/>
            <person name="Taylor M.S."/>
            <person name="Tegner J."/>
            <person name="Teichmann S.A."/>
            <person name="Ueda H.R."/>
            <person name="van Nimwegen E."/>
            <person name="Verardo R."/>
            <person name="Wei C.L."/>
            <person name="Yagi K."/>
            <person name="Yamanishi H."/>
            <person name="Zabarovsky E."/>
            <person name="Zhu S."/>
            <person name="Zimmer A."/>
            <person name="Hide W."/>
            <person name="Bult C."/>
            <person name="Grimmond S.M."/>
            <person name="Teasdale R.D."/>
            <person name="Liu E.T."/>
            <person name="Brusic V."/>
            <person name="Quackenbush J."/>
            <person name="Wahlestedt C."/>
            <person name="Mattick J.S."/>
            <person name="Hume D.A."/>
            <person name="Kai C."/>
            <person name="Sasaki D."/>
            <person name="Tomaru Y."/>
            <person name="Fukuda S."/>
            <person name="Kanamori-Katayama M."/>
            <person name="Suzuki M."/>
            <person name="Aoki J."/>
            <person name="Arakawa T."/>
            <person name="Iida J."/>
            <person name="Imamura K."/>
            <person name="Itoh M."/>
            <person name="Kato T."/>
            <person name="Kawaji H."/>
            <person name="Kawagashira N."/>
            <person name="Kawashima T."/>
            <person name="Kojima M."/>
            <person name="Kondo S."/>
            <person name="Konno H."/>
            <person name="Nakano K."/>
            <person name="Ninomiya N."/>
            <person name="Nishio T."/>
            <person name="Okada M."/>
            <person name="Plessy C."/>
            <person name="Shibata K."/>
            <person name="Shiraki T."/>
            <person name="Suzuki S."/>
            <person name="Tagami M."/>
            <person name="Waki K."/>
            <person name="Watahiki A."/>
            <person name="Okamura-Oho Y."/>
            <person name="Suzuki H."/>
            <person name="Kawai J."/>
            <person name="Hayashizaki Y."/>
        </authorList>
    </citation>
    <scope>NUCLEOTIDE SEQUENCE [LARGE SCALE MRNA]</scope>
    <source>
        <strain>C57BL/6J</strain>
        <tissue>Spinal ganglion</tissue>
    </source>
</reference>
<reference key="3">
    <citation type="journal article" date="2004" name="Genome Res.">
        <title>The status, quality, and expansion of the NIH full-length cDNA project: the Mammalian Gene Collection (MGC).</title>
        <authorList>
            <consortium name="The MGC Project Team"/>
        </authorList>
    </citation>
    <scope>NUCLEOTIDE SEQUENCE [LARGE SCALE MRNA]</scope>
    <source>
        <strain>FVB/N</strain>
        <tissue>Mammary gland</tissue>
    </source>
</reference>
<reference key="4">
    <citation type="submission" date="2007-04" db="UniProtKB">
        <authorList>
            <person name="Lubec G."/>
            <person name="Kang S.U."/>
        </authorList>
    </citation>
    <scope>PROTEIN SEQUENCE OF 257-266</scope>
    <scope>IDENTIFICATION BY MASS SPECTROMETRY</scope>
    <source>
        <strain>C57BL/6J</strain>
        <tissue>Brain</tissue>
    </source>
</reference>
<reference key="5">
    <citation type="journal article" date="2010" name="Cell">
        <title>A tissue-specific atlas of mouse protein phosphorylation and expression.</title>
        <authorList>
            <person name="Huttlin E.L."/>
            <person name="Jedrychowski M.P."/>
            <person name="Elias J.E."/>
            <person name="Goswami T."/>
            <person name="Rad R."/>
            <person name="Beausoleil S.A."/>
            <person name="Villen J."/>
            <person name="Haas W."/>
            <person name="Sowa M.E."/>
            <person name="Gygi S.P."/>
        </authorList>
    </citation>
    <scope>IDENTIFICATION BY MASS SPECTROMETRY [LARGE SCALE ANALYSIS]</scope>
    <source>
        <tissue>Brain</tissue>
        <tissue>Brown adipose tissue</tissue>
        <tissue>Heart</tissue>
        <tissue>Kidney</tissue>
        <tissue>Liver</tissue>
        <tissue>Lung</tissue>
        <tissue>Pancreas</tissue>
        <tissue>Spleen</tissue>
        <tissue>Testis</tissue>
    </source>
</reference>
<reference key="6">
    <citation type="journal article" date="2013" name="Mol. Cell">
        <title>SIRT5-mediated lysine desuccinylation impacts diverse metabolic pathways.</title>
        <authorList>
            <person name="Park J."/>
            <person name="Chen Y."/>
            <person name="Tishkoff D.X."/>
            <person name="Peng C."/>
            <person name="Tan M."/>
            <person name="Dai L."/>
            <person name="Xie Z."/>
            <person name="Zhang Y."/>
            <person name="Zwaans B.M."/>
            <person name="Skinner M.E."/>
            <person name="Lombard D.B."/>
            <person name="Zhao Y."/>
        </authorList>
    </citation>
    <scope>ACETYLATION [LARGE SCALE ANALYSIS] AT CYS-2; LYS-12 AND LYS-20</scope>
    <scope>CLEAVAGE OF INITIATOR METHIONINE [LARGE SCALE ANALYSIS]</scope>
    <scope>IDENTIFICATION BY MASS SPECTROMETRY [LARGE SCALE ANALYSIS]</scope>
    <source>
        <tissue>Embryonic fibroblast</tissue>
    </source>
</reference>
<reference key="7">
    <citation type="journal article" date="2013" name="Proc. Natl. Acad. Sci. U.S.A.">
        <title>Label-free quantitative proteomics of the lysine acetylome in mitochondria identifies substrates of SIRT3 in metabolic pathways.</title>
        <authorList>
            <person name="Rardin M.J."/>
            <person name="Newman J.C."/>
            <person name="Held J.M."/>
            <person name="Cusack M.P."/>
            <person name="Sorensen D.J."/>
            <person name="Li B."/>
            <person name="Schilling B."/>
            <person name="Mooney S.D."/>
            <person name="Kahn C.R."/>
            <person name="Verdin E."/>
            <person name="Gibson B.W."/>
        </authorList>
    </citation>
    <scope>ACETYLATION [LARGE SCALE ANALYSIS] AT LYS-15; LYS-20; LYS-90 AND LYS-266</scope>
    <scope>IDENTIFICATION BY MASS SPECTROMETRY [LARGE SCALE ANALYSIS]</scope>
    <source>
        <tissue>Liver</tissue>
    </source>
</reference>
<reference key="8">
    <citation type="journal article" date="2021" name="Proc. Natl. Acad. Sci. U.S.A.">
        <title>ARMC12 regulates spatiotemporal mitochondrial dynamics during spermiogenesis and is required for male fertility.</title>
        <authorList>
            <person name="Shimada K."/>
            <person name="Park S."/>
            <person name="Miyata H."/>
            <person name="Yu Z."/>
            <person name="Morohoshi A."/>
            <person name="Oura S."/>
            <person name="Matzuk M.M."/>
            <person name="Ikawa M."/>
        </authorList>
    </citation>
    <scope>INTERACTION WITH ARMC12</scope>
</reference>
<reference key="9">
    <citation type="journal article" date="2022" name="Nat. Commun.">
        <title>Kastor and Polluks polypeptides encoded by a single gene locus cooperatively regulate VDAC and spermatogenesis.</title>
        <authorList>
            <person name="Mise S."/>
            <person name="Matsumoto A."/>
            <person name="Shimada K."/>
            <person name="Hosaka T."/>
            <person name="Takahashi M."/>
            <person name="Ichihara K."/>
            <person name="Shimizu H."/>
            <person name="Shiraishi C."/>
            <person name="Saito D."/>
            <person name="Suyama M."/>
            <person name="Yasuda T."/>
            <person name="Ide T."/>
            <person name="Izumi Y."/>
            <person name="Bamba T."/>
            <person name="Kimura-Someya T."/>
            <person name="Shirouzu M."/>
            <person name="Miyata H."/>
            <person name="Ikawa M."/>
            <person name="Nakayama K.I."/>
        </authorList>
    </citation>
    <scope>INTERACTION WITH MISFA</scope>
    <scope>DISRUPTION PHENOTYPE</scope>
    <scope>FUNCTION</scope>
</reference>